<organism>
    <name type="scientific">Oryza sativa subsp. indica</name>
    <name type="common">Rice</name>
    <dbReference type="NCBI Taxonomy" id="39946"/>
    <lineage>
        <taxon>Eukaryota</taxon>
        <taxon>Viridiplantae</taxon>
        <taxon>Streptophyta</taxon>
        <taxon>Embryophyta</taxon>
        <taxon>Tracheophyta</taxon>
        <taxon>Spermatophyta</taxon>
        <taxon>Magnoliopsida</taxon>
        <taxon>Liliopsida</taxon>
        <taxon>Poales</taxon>
        <taxon>Poaceae</taxon>
        <taxon>BOP clade</taxon>
        <taxon>Oryzoideae</taxon>
        <taxon>Oryzeae</taxon>
        <taxon>Oryzinae</taxon>
        <taxon>Oryza</taxon>
        <taxon>Oryza sativa</taxon>
    </lineage>
</organism>
<feature type="chain" id="PRO_0000300859" description="Phytochrome A">
    <location>
        <begin position="1"/>
        <end position="1128"/>
    </location>
</feature>
<feature type="domain" description="GAF">
    <location>
        <begin position="219"/>
        <end position="404"/>
    </location>
</feature>
<feature type="domain" description="PAS 1" evidence="3">
    <location>
        <begin position="620"/>
        <end position="690"/>
    </location>
</feature>
<feature type="domain" description="PAS 2" evidence="3">
    <location>
        <begin position="750"/>
        <end position="834"/>
    </location>
</feature>
<feature type="domain" description="Histidine kinase" evidence="2">
    <location>
        <begin position="904"/>
        <end position="1124"/>
    </location>
</feature>
<feature type="region of interest" description="Disordered" evidence="4">
    <location>
        <begin position="1"/>
        <end position="24"/>
    </location>
</feature>
<feature type="compositionally biased region" description="Low complexity" evidence="4">
    <location>
        <begin position="1"/>
        <end position="21"/>
    </location>
</feature>
<feature type="binding site" description="covalent" evidence="1">
    <location>
        <position position="324"/>
    </location>
    <ligand>
        <name>phytochromobilin</name>
        <dbReference type="ChEBI" id="CHEBI:189064"/>
    </ligand>
</feature>
<accession>A2XLG5</accession>
<accession>P10931</accession>
<accession>Q8LLN7</accession>
<keyword id="KW-0157">Chromophore</keyword>
<keyword id="KW-0600">Photoreceptor protein</keyword>
<keyword id="KW-0675">Receptor</keyword>
<keyword id="KW-1185">Reference proteome</keyword>
<keyword id="KW-0677">Repeat</keyword>
<keyword id="KW-0716">Sensory transduction</keyword>
<keyword id="KW-0804">Transcription</keyword>
<keyword id="KW-0805">Transcription regulation</keyword>
<proteinExistence type="inferred from homology"/>
<reference key="1">
    <citation type="journal article" date="1989" name="Nucleic Acids Res.">
        <title>The sequence of the rice phytochrome gene.</title>
        <authorList>
            <person name="Kay S.A."/>
            <person name="Keith B."/>
            <person name="Shinozaki K."/>
            <person name="Chye M.L."/>
            <person name="Chua N.-H."/>
        </authorList>
    </citation>
    <scope>NUCLEOTIDE SEQUENCE [GENOMIC DNA]</scope>
    <source>
        <strain>cv. IR36</strain>
    </source>
</reference>
<reference key="2">
    <citation type="journal article" date="2005" name="PLoS Biol.">
        <title>The genomes of Oryza sativa: a history of duplications.</title>
        <authorList>
            <person name="Yu J."/>
            <person name="Wang J."/>
            <person name="Lin W."/>
            <person name="Li S."/>
            <person name="Li H."/>
            <person name="Zhou J."/>
            <person name="Ni P."/>
            <person name="Dong W."/>
            <person name="Hu S."/>
            <person name="Zeng C."/>
            <person name="Zhang J."/>
            <person name="Zhang Y."/>
            <person name="Li R."/>
            <person name="Xu Z."/>
            <person name="Li S."/>
            <person name="Li X."/>
            <person name="Zheng H."/>
            <person name="Cong L."/>
            <person name="Lin L."/>
            <person name="Yin J."/>
            <person name="Geng J."/>
            <person name="Li G."/>
            <person name="Shi J."/>
            <person name="Liu J."/>
            <person name="Lv H."/>
            <person name="Li J."/>
            <person name="Wang J."/>
            <person name="Deng Y."/>
            <person name="Ran L."/>
            <person name="Shi X."/>
            <person name="Wang X."/>
            <person name="Wu Q."/>
            <person name="Li C."/>
            <person name="Ren X."/>
            <person name="Wang J."/>
            <person name="Wang X."/>
            <person name="Li D."/>
            <person name="Liu D."/>
            <person name="Zhang X."/>
            <person name="Ji Z."/>
            <person name="Zhao W."/>
            <person name="Sun Y."/>
            <person name="Zhang Z."/>
            <person name="Bao J."/>
            <person name="Han Y."/>
            <person name="Dong L."/>
            <person name="Ji J."/>
            <person name="Chen P."/>
            <person name="Wu S."/>
            <person name="Liu J."/>
            <person name="Xiao Y."/>
            <person name="Bu D."/>
            <person name="Tan J."/>
            <person name="Yang L."/>
            <person name="Ye C."/>
            <person name="Zhang J."/>
            <person name="Xu J."/>
            <person name="Zhou Y."/>
            <person name="Yu Y."/>
            <person name="Zhang B."/>
            <person name="Zhuang S."/>
            <person name="Wei H."/>
            <person name="Liu B."/>
            <person name="Lei M."/>
            <person name="Yu H."/>
            <person name="Li Y."/>
            <person name="Xu H."/>
            <person name="Wei S."/>
            <person name="He X."/>
            <person name="Fang L."/>
            <person name="Zhang Z."/>
            <person name="Zhang Y."/>
            <person name="Huang X."/>
            <person name="Su Z."/>
            <person name="Tong W."/>
            <person name="Li J."/>
            <person name="Tong Z."/>
            <person name="Li S."/>
            <person name="Ye J."/>
            <person name="Wang L."/>
            <person name="Fang L."/>
            <person name="Lei T."/>
            <person name="Chen C.-S."/>
            <person name="Chen H.-C."/>
            <person name="Xu Z."/>
            <person name="Li H."/>
            <person name="Huang H."/>
            <person name="Zhang F."/>
            <person name="Xu H."/>
            <person name="Li N."/>
            <person name="Zhao C."/>
            <person name="Li S."/>
            <person name="Dong L."/>
            <person name="Huang Y."/>
            <person name="Li L."/>
            <person name="Xi Y."/>
            <person name="Qi Q."/>
            <person name="Li W."/>
            <person name="Zhang B."/>
            <person name="Hu W."/>
            <person name="Zhang Y."/>
            <person name="Tian X."/>
            <person name="Jiao Y."/>
            <person name="Liang X."/>
            <person name="Jin J."/>
            <person name="Gao L."/>
            <person name="Zheng W."/>
            <person name="Hao B."/>
            <person name="Liu S.-M."/>
            <person name="Wang W."/>
            <person name="Yuan L."/>
            <person name="Cao M."/>
            <person name="McDermott J."/>
            <person name="Samudrala R."/>
            <person name="Wang J."/>
            <person name="Wong G.K.-S."/>
            <person name="Yang H."/>
        </authorList>
    </citation>
    <scope>NUCLEOTIDE SEQUENCE [LARGE SCALE GENOMIC DNA]</scope>
    <source>
        <strain>cv. 93-11</strain>
    </source>
</reference>
<reference key="3">
    <citation type="journal article" date="1992" name="Genes Dev.">
        <title>Serine-to-alanine substitutions at the amino-terminal region of phytochrome A result in an increase in biological activity.</title>
        <authorList>
            <person name="Stockhaus J."/>
            <person name="Nagatani A."/>
            <person name="Halfter U."/>
            <person name="Kay S."/>
            <person name="Furuya M."/>
            <person name="Chua N.-H."/>
        </authorList>
    </citation>
    <scope>MUTAGENESIS OF N-TERMINAL SERINES</scope>
</reference>
<comment type="function">
    <text>Regulatory photoreceptor which exists in two forms that are reversibly interconvertible by light: the Pr form that absorbs maximally in the red region of the spectrum and the Pfr form that absorbs maximally in the far-red region. Photoconversion of Pr to Pfr induces an array of morphogenic responses, whereas reconversion of Pfr to Pr cancels the induction of those responses. Pfr controls the expression of a number of nuclear genes including those encoding the small subunit of ribulose-bisphosphate carboxylase, chlorophyll A/B binding protein, protochlorophyllide reductase, rRNA, etc. It also controls the expression of its own gene(s) in a negative feedback fashion.</text>
</comment>
<comment type="subunit">
    <text>Homodimer.</text>
</comment>
<comment type="PTM">
    <text evidence="1">Contains one covalently linked phytochromobilin chromophore.</text>
</comment>
<comment type="similarity">
    <text evidence="5">Belongs to the phytochrome family.</text>
</comment>
<dbReference type="EMBL" id="X14172">
    <property type="protein sequence ID" value="CAA32375.1"/>
    <property type="molecule type" value="Genomic_DNA"/>
</dbReference>
<dbReference type="EMBL" id="CM000128">
    <property type="status" value="NOT_ANNOTATED_CDS"/>
    <property type="molecule type" value="Genomic_DNA"/>
</dbReference>
<dbReference type="PIR" id="S03728">
    <property type="entry name" value="S03728"/>
</dbReference>
<dbReference type="SMR" id="A2XLG5"/>
<dbReference type="STRING" id="39946.A2XLG5"/>
<dbReference type="iPTMnet" id="A2XLG5"/>
<dbReference type="EnsemblPlants" id="OsLaMu_03g0032170.01">
    <property type="protein sequence ID" value="OsLaMu_03g0032170.01"/>
    <property type="gene ID" value="OsLaMu_03g0032170"/>
</dbReference>
<dbReference type="EnsemblPlants" id="OsPr106_03g0032290.01">
    <property type="protein sequence ID" value="OsPr106_03g0032290.01"/>
    <property type="gene ID" value="OsPr106_03g0032290"/>
</dbReference>
<dbReference type="EnsemblPlants" id="OsZS97_03G032310_01">
    <property type="protein sequence ID" value="OsZS97_03G032310_01"/>
    <property type="gene ID" value="OsZS97_03G032310"/>
</dbReference>
<dbReference type="Gramene" id="OsLaMu_03g0032170.01">
    <property type="protein sequence ID" value="OsLaMu_03g0032170.01"/>
    <property type="gene ID" value="OsLaMu_03g0032170"/>
</dbReference>
<dbReference type="Gramene" id="OsPr106_03g0032290.01">
    <property type="protein sequence ID" value="OsPr106_03g0032290.01"/>
    <property type="gene ID" value="OsPr106_03g0032290"/>
</dbReference>
<dbReference type="Gramene" id="OsZS97_03G032310_01">
    <property type="protein sequence ID" value="OsZS97_03G032310_01"/>
    <property type="gene ID" value="OsZS97_03G032310"/>
</dbReference>
<dbReference type="Proteomes" id="UP000007015">
    <property type="component" value="Chromosome 3"/>
</dbReference>
<dbReference type="GO" id="GO:0000155">
    <property type="term" value="F:phosphorelay sensor kinase activity"/>
    <property type="evidence" value="ECO:0007669"/>
    <property type="project" value="InterPro"/>
</dbReference>
<dbReference type="GO" id="GO:0009881">
    <property type="term" value="F:photoreceptor activity"/>
    <property type="evidence" value="ECO:0007669"/>
    <property type="project" value="UniProtKB-KW"/>
</dbReference>
<dbReference type="GO" id="GO:0042803">
    <property type="term" value="F:protein homodimerization activity"/>
    <property type="evidence" value="ECO:0007669"/>
    <property type="project" value="InterPro"/>
</dbReference>
<dbReference type="GO" id="GO:0009584">
    <property type="term" value="P:detection of visible light"/>
    <property type="evidence" value="ECO:0007669"/>
    <property type="project" value="InterPro"/>
</dbReference>
<dbReference type="GO" id="GO:0009585">
    <property type="term" value="P:red, far-red light phototransduction"/>
    <property type="evidence" value="ECO:0007669"/>
    <property type="project" value="InterPro"/>
</dbReference>
<dbReference type="GO" id="GO:0006355">
    <property type="term" value="P:regulation of DNA-templated transcription"/>
    <property type="evidence" value="ECO:0007669"/>
    <property type="project" value="InterPro"/>
</dbReference>
<dbReference type="CDD" id="cd00082">
    <property type="entry name" value="HisKA"/>
    <property type="match status" value="1"/>
</dbReference>
<dbReference type="CDD" id="cd00130">
    <property type="entry name" value="PAS"/>
    <property type="match status" value="2"/>
</dbReference>
<dbReference type="FunFam" id="3.30.450.20:FF:000039">
    <property type="entry name" value="Phytochrome"/>
    <property type="match status" value="1"/>
</dbReference>
<dbReference type="FunFam" id="3.30.450.270:FF:000001">
    <property type="entry name" value="Phytochrome"/>
    <property type="match status" value="1"/>
</dbReference>
<dbReference type="Gene3D" id="3.30.450.270">
    <property type="match status" value="1"/>
</dbReference>
<dbReference type="Gene3D" id="3.30.450.40">
    <property type="match status" value="1"/>
</dbReference>
<dbReference type="Gene3D" id="3.30.565.10">
    <property type="entry name" value="Histidine kinase-like ATPase, C-terminal domain"/>
    <property type="match status" value="1"/>
</dbReference>
<dbReference type="Gene3D" id="3.30.450.20">
    <property type="entry name" value="PAS domain"/>
    <property type="match status" value="3"/>
</dbReference>
<dbReference type="InterPro" id="IPR003018">
    <property type="entry name" value="GAF"/>
</dbReference>
<dbReference type="InterPro" id="IPR029016">
    <property type="entry name" value="GAF-like_dom_sf"/>
</dbReference>
<dbReference type="InterPro" id="IPR036890">
    <property type="entry name" value="HATPase_C_sf"/>
</dbReference>
<dbReference type="InterPro" id="IPR005467">
    <property type="entry name" value="His_kinase_dom"/>
</dbReference>
<dbReference type="InterPro" id="IPR003661">
    <property type="entry name" value="HisK_dim/P_dom"/>
</dbReference>
<dbReference type="InterPro" id="IPR000014">
    <property type="entry name" value="PAS"/>
</dbReference>
<dbReference type="InterPro" id="IPR035965">
    <property type="entry name" value="PAS-like_dom_sf"/>
</dbReference>
<dbReference type="InterPro" id="IPR013654">
    <property type="entry name" value="PAS_2"/>
</dbReference>
<dbReference type="InterPro" id="IPR013767">
    <property type="entry name" value="PAS_fold"/>
</dbReference>
<dbReference type="InterPro" id="IPR016132">
    <property type="entry name" value="Phyto_chromo_attachment"/>
</dbReference>
<dbReference type="InterPro" id="IPR013516">
    <property type="entry name" value="Phyto_chromo_BS"/>
</dbReference>
<dbReference type="InterPro" id="IPR001294">
    <property type="entry name" value="Phytochrome"/>
</dbReference>
<dbReference type="InterPro" id="IPR012129">
    <property type="entry name" value="Phytochrome_A-E"/>
</dbReference>
<dbReference type="InterPro" id="IPR013515">
    <property type="entry name" value="Phytochrome_cen-reg"/>
</dbReference>
<dbReference type="InterPro" id="IPR043150">
    <property type="entry name" value="Phytochrome_PHY_sf"/>
</dbReference>
<dbReference type="NCBIfam" id="TIGR00229">
    <property type="entry name" value="sensory_box"/>
    <property type="match status" value="1"/>
</dbReference>
<dbReference type="PANTHER" id="PTHR47876">
    <property type="entry name" value="OS08G0260000 PROTEIN"/>
    <property type="match status" value="1"/>
</dbReference>
<dbReference type="PANTHER" id="PTHR47876:SF3">
    <property type="entry name" value="PHYTOCHROME 1"/>
    <property type="match status" value="1"/>
</dbReference>
<dbReference type="Pfam" id="PF01590">
    <property type="entry name" value="GAF"/>
    <property type="match status" value="1"/>
</dbReference>
<dbReference type="Pfam" id="PF02518">
    <property type="entry name" value="HATPase_c"/>
    <property type="match status" value="1"/>
</dbReference>
<dbReference type="Pfam" id="PF00512">
    <property type="entry name" value="HisKA"/>
    <property type="match status" value="1"/>
</dbReference>
<dbReference type="Pfam" id="PF00989">
    <property type="entry name" value="PAS"/>
    <property type="match status" value="2"/>
</dbReference>
<dbReference type="Pfam" id="PF08446">
    <property type="entry name" value="PAS_2"/>
    <property type="match status" value="1"/>
</dbReference>
<dbReference type="Pfam" id="PF00360">
    <property type="entry name" value="PHY"/>
    <property type="match status" value="1"/>
</dbReference>
<dbReference type="PIRSF" id="PIRSF000084">
    <property type="entry name" value="Phytochrome"/>
    <property type="match status" value="1"/>
</dbReference>
<dbReference type="PRINTS" id="PR01033">
    <property type="entry name" value="PHYTOCHROME"/>
</dbReference>
<dbReference type="SMART" id="SM00065">
    <property type="entry name" value="GAF"/>
    <property type="match status" value="1"/>
</dbReference>
<dbReference type="SMART" id="SM00387">
    <property type="entry name" value="HATPase_c"/>
    <property type="match status" value="1"/>
</dbReference>
<dbReference type="SMART" id="SM00388">
    <property type="entry name" value="HisKA"/>
    <property type="match status" value="1"/>
</dbReference>
<dbReference type="SMART" id="SM00091">
    <property type="entry name" value="PAS"/>
    <property type="match status" value="2"/>
</dbReference>
<dbReference type="SUPFAM" id="SSF55874">
    <property type="entry name" value="ATPase domain of HSP90 chaperone/DNA topoisomerase II/histidine kinase"/>
    <property type="match status" value="1"/>
</dbReference>
<dbReference type="SUPFAM" id="SSF55781">
    <property type="entry name" value="GAF domain-like"/>
    <property type="match status" value="2"/>
</dbReference>
<dbReference type="SUPFAM" id="SSF55785">
    <property type="entry name" value="PYP-like sensor domain (PAS domain)"/>
    <property type="match status" value="3"/>
</dbReference>
<dbReference type="PROSITE" id="PS50109">
    <property type="entry name" value="HIS_KIN"/>
    <property type="match status" value="1"/>
</dbReference>
<dbReference type="PROSITE" id="PS50112">
    <property type="entry name" value="PAS"/>
    <property type="match status" value="2"/>
</dbReference>
<dbReference type="PROSITE" id="PS00245">
    <property type="entry name" value="PHYTOCHROME_1"/>
    <property type="match status" value="1"/>
</dbReference>
<dbReference type="PROSITE" id="PS50046">
    <property type="entry name" value="PHYTOCHROME_2"/>
    <property type="match status" value="1"/>
</dbReference>
<evidence type="ECO:0000250" key="1"/>
<evidence type="ECO:0000255" key="2">
    <source>
        <dbReference type="PROSITE-ProRule" id="PRU00107"/>
    </source>
</evidence>
<evidence type="ECO:0000255" key="3">
    <source>
        <dbReference type="PROSITE-ProRule" id="PRU00140"/>
    </source>
</evidence>
<evidence type="ECO:0000256" key="4">
    <source>
        <dbReference type="SAM" id="MobiDB-lite"/>
    </source>
</evidence>
<evidence type="ECO:0000305" key="5"/>
<gene>
    <name type="primary">PHYA</name>
    <name type="synonym">PHY18</name>
    <name type="ORF">OsI_012908</name>
</gene>
<sequence length="1128" mass="125289">MSSSRPTQCSSSSSRTRQSSRARILAQTTLDAELNAEYEEYGDSFDYSKLVEAQRTTGPEQQARSEKVIAYLHHIQRAKLIQPFGCLLALDEKTFNVIALSENAPEMLTTVSHAVPSVDDPPKLRIGTNVWSLFTDPGATALQKALGFADVSLLNPILVQCKTSGKPFYAIVHRATGCLVVDFEPVKPTEFPATAAGALQSYKLAAKAISKIQSLPGGSMEVLCNTVVKELFDLTGYDRVMAYKFHEDDHGEVFAEITKPGLEPYLGLHYPATDIPQAARFLFMKNKVRMICDCRARSIKIIEDESLHLDISLCGSTLRAPHSCHLQYMENMNSIASLVMAVVVNENEDDDEVGADQPAQQQKRKKLWGLLVCHHESPRYVPFPLRYACEFLAQVFAVHVNKEFELERQVREKSILRMQTMLSDMLLRESSPLSIVSGTPNIMDLVKCDGAALLYGGKVWRLQNAPTESQIRDIAFWLSDVHRDSTGLSTDSLHDAGYPGAAALGDMICGMAVAKINSKDILFWFRSHTAAEIRWGGAKHDPSDKDDSRRMHPRLSFKAFLEVVKMKSLPWNDYEMDAIHSLQLILRGTLNDDIKPTRAASLDNQVGDLKLDGLAELQAVTSEMVRLMETATVPILAVDSNGLVNGWNQKVAELTGLRVDEAIGRHILTVVEESSVPVVQRMLYLALQGKEEKEVKFEVKTHGSKRDDGPVILVVNACASRDLHDHVVGVCFVAQDMTVHKLVMDKFTRVEGDYKAIIHNPSPLIPPIFGADEFGWCSEWNAAMTKLTGWHRDEVINKMLLGEVFDSTNASCLVKNKDAFVSLCILINSALAGDETEKAPFSFFDRNGKYIECLLSVNRKVNADGVITGVFCFIQVPSHELQHALHVQQASQQNALTKLKAYSYMRHAINNPLSGMLYSRKALKNTGLNEEQMKEVNVADSCHRQLNKILSDLDQDSVMNKSSCLDLEMVEFVLQDVFVAAVSQVLITCQGKGIRVSCNLPERYMKQTVYGDGVRLQQILSDFLFVSVKFSPVGGSVEISCSLTKNSIGENLHLIDLELRIKHQGKGVPADLLSQMYEDDNKEQSDEGMSLAVSRNLLRLMNGDVRHMREAGMSTFILSVELASAPAK</sequence>
<protein>
    <recommendedName>
        <fullName>Phytochrome A</fullName>
    </recommendedName>
</protein>
<name>PHYA_ORYSI</name>